<protein>
    <recommendedName>
        <fullName evidence="1">Small ribosomal subunit protein uS11</fullName>
    </recommendedName>
    <alternativeName>
        <fullName evidence="2">30S ribosomal protein S11</fullName>
    </alternativeName>
</protein>
<organism>
    <name type="scientific">Chlorobium chlorochromatii (strain CaD3)</name>
    <dbReference type="NCBI Taxonomy" id="340177"/>
    <lineage>
        <taxon>Bacteria</taxon>
        <taxon>Pseudomonadati</taxon>
        <taxon>Chlorobiota</taxon>
        <taxon>Chlorobiia</taxon>
        <taxon>Chlorobiales</taxon>
        <taxon>Chlorobiaceae</taxon>
        <taxon>Chlorobium/Pelodictyon group</taxon>
        <taxon>Chlorobium</taxon>
    </lineage>
</organism>
<feature type="chain" id="PRO_0000230396" description="Small ribosomal subunit protein uS11">
    <location>
        <begin position="1"/>
        <end position="127"/>
    </location>
</feature>
<proteinExistence type="inferred from homology"/>
<keyword id="KW-0687">Ribonucleoprotein</keyword>
<keyword id="KW-0689">Ribosomal protein</keyword>
<keyword id="KW-0694">RNA-binding</keyword>
<keyword id="KW-0699">rRNA-binding</keyword>
<reference key="1">
    <citation type="submission" date="2005-08" db="EMBL/GenBank/DDBJ databases">
        <title>Complete sequence of Chlorobium chlorochromatii CaD3.</title>
        <authorList>
            <consortium name="US DOE Joint Genome Institute"/>
            <person name="Copeland A."/>
            <person name="Lucas S."/>
            <person name="Lapidus A."/>
            <person name="Barry K."/>
            <person name="Detter J.C."/>
            <person name="Glavina T."/>
            <person name="Hammon N."/>
            <person name="Israni S."/>
            <person name="Pitluck S."/>
            <person name="Bryant D."/>
            <person name="Schmutz J."/>
            <person name="Larimer F."/>
            <person name="Land M."/>
            <person name="Kyrpides N."/>
            <person name="Ivanova N."/>
            <person name="Richardson P."/>
        </authorList>
    </citation>
    <scope>NUCLEOTIDE SEQUENCE [LARGE SCALE GENOMIC DNA]</scope>
    <source>
        <strain>CaD3</strain>
    </source>
</reference>
<sequence>MATVSRKKKKVKVTPEGAVHIKASFNNIMVTITDVQGNTVSWSSAGKNGFKGSKKNTPYASQVTSEAAAKEAFDLGMRHVHVFIKGPGAGRDAAIRALQGAGLEVRTIKDITPLPHNGCRPPKRRRV</sequence>
<dbReference type="EMBL" id="CP000108">
    <property type="protein sequence ID" value="ABB29077.1"/>
    <property type="molecule type" value="Genomic_DNA"/>
</dbReference>
<dbReference type="SMR" id="Q3APJ8"/>
<dbReference type="STRING" id="340177.Cag_1826"/>
<dbReference type="KEGG" id="cch:Cag_1826"/>
<dbReference type="eggNOG" id="COG0100">
    <property type="taxonomic scope" value="Bacteria"/>
</dbReference>
<dbReference type="HOGENOM" id="CLU_072439_5_0_10"/>
<dbReference type="OrthoDB" id="9806415at2"/>
<dbReference type="GO" id="GO:1990904">
    <property type="term" value="C:ribonucleoprotein complex"/>
    <property type="evidence" value="ECO:0007669"/>
    <property type="project" value="UniProtKB-KW"/>
</dbReference>
<dbReference type="GO" id="GO:0005840">
    <property type="term" value="C:ribosome"/>
    <property type="evidence" value="ECO:0007669"/>
    <property type="project" value="UniProtKB-KW"/>
</dbReference>
<dbReference type="GO" id="GO:0019843">
    <property type="term" value="F:rRNA binding"/>
    <property type="evidence" value="ECO:0007669"/>
    <property type="project" value="UniProtKB-UniRule"/>
</dbReference>
<dbReference type="GO" id="GO:0003735">
    <property type="term" value="F:structural constituent of ribosome"/>
    <property type="evidence" value="ECO:0007669"/>
    <property type="project" value="InterPro"/>
</dbReference>
<dbReference type="GO" id="GO:0006412">
    <property type="term" value="P:translation"/>
    <property type="evidence" value="ECO:0007669"/>
    <property type="project" value="UniProtKB-UniRule"/>
</dbReference>
<dbReference type="FunFam" id="3.30.420.80:FF:000004">
    <property type="entry name" value="30S ribosomal protein S11"/>
    <property type="match status" value="1"/>
</dbReference>
<dbReference type="Gene3D" id="3.30.420.80">
    <property type="entry name" value="Ribosomal protein S11"/>
    <property type="match status" value="1"/>
</dbReference>
<dbReference type="HAMAP" id="MF_01310">
    <property type="entry name" value="Ribosomal_uS11"/>
    <property type="match status" value="1"/>
</dbReference>
<dbReference type="InterPro" id="IPR001971">
    <property type="entry name" value="Ribosomal_uS11"/>
</dbReference>
<dbReference type="InterPro" id="IPR019981">
    <property type="entry name" value="Ribosomal_uS11_bac-type"/>
</dbReference>
<dbReference type="InterPro" id="IPR018102">
    <property type="entry name" value="Ribosomal_uS11_CS"/>
</dbReference>
<dbReference type="InterPro" id="IPR036967">
    <property type="entry name" value="Ribosomal_uS11_sf"/>
</dbReference>
<dbReference type="NCBIfam" id="NF003698">
    <property type="entry name" value="PRK05309.1"/>
    <property type="match status" value="1"/>
</dbReference>
<dbReference type="NCBIfam" id="TIGR03632">
    <property type="entry name" value="uS11_bact"/>
    <property type="match status" value="1"/>
</dbReference>
<dbReference type="PANTHER" id="PTHR11759">
    <property type="entry name" value="40S RIBOSOMAL PROTEIN S14/30S RIBOSOMAL PROTEIN S11"/>
    <property type="match status" value="1"/>
</dbReference>
<dbReference type="Pfam" id="PF00411">
    <property type="entry name" value="Ribosomal_S11"/>
    <property type="match status" value="1"/>
</dbReference>
<dbReference type="PIRSF" id="PIRSF002131">
    <property type="entry name" value="Ribosomal_S11"/>
    <property type="match status" value="1"/>
</dbReference>
<dbReference type="SUPFAM" id="SSF53137">
    <property type="entry name" value="Translational machinery components"/>
    <property type="match status" value="1"/>
</dbReference>
<dbReference type="PROSITE" id="PS00054">
    <property type="entry name" value="RIBOSOMAL_S11"/>
    <property type="match status" value="1"/>
</dbReference>
<accession>Q3APJ8</accession>
<comment type="function">
    <text evidence="1">Located on the platform of the 30S subunit, it bridges several disparate RNA helices of the 16S rRNA. Forms part of the Shine-Dalgarno cleft in the 70S ribosome.</text>
</comment>
<comment type="subunit">
    <text evidence="1">Part of the 30S ribosomal subunit. Interacts with proteins S7 and S18. Binds to IF-3.</text>
</comment>
<comment type="similarity">
    <text evidence="1">Belongs to the universal ribosomal protein uS11 family.</text>
</comment>
<name>RS11_CHLCH</name>
<evidence type="ECO:0000255" key="1">
    <source>
        <dbReference type="HAMAP-Rule" id="MF_01310"/>
    </source>
</evidence>
<evidence type="ECO:0000305" key="2"/>
<gene>
    <name evidence="1" type="primary">rpsK</name>
    <name type="ordered locus">Cag_1826</name>
</gene>